<keyword id="KW-0687">Ribonucleoprotein</keyword>
<keyword id="KW-0689">Ribosomal protein</keyword>
<name>RL32_BIFLD</name>
<protein>
    <recommendedName>
        <fullName evidence="1">Large ribosomal subunit protein bL32</fullName>
    </recommendedName>
    <alternativeName>
        <fullName evidence="2">50S ribosomal protein L32</fullName>
    </alternativeName>
</protein>
<comment type="similarity">
    <text evidence="1">Belongs to the bacterial ribosomal protein bL32 family.</text>
</comment>
<gene>
    <name evidence="1" type="primary">rpmF</name>
    <name type="ordered locus">BLD_1040</name>
</gene>
<proteinExistence type="inferred from homology"/>
<feature type="chain" id="PRO_1000120090" description="Large ribosomal subunit protein bL32">
    <location>
        <begin position="1"/>
        <end position="64"/>
    </location>
</feature>
<organism>
    <name type="scientific">Bifidobacterium longum (strain DJO10A)</name>
    <dbReference type="NCBI Taxonomy" id="205913"/>
    <lineage>
        <taxon>Bacteria</taxon>
        <taxon>Bacillati</taxon>
        <taxon>Actinomycetota</taxon>
        <taxon>Actinomycetes</taxon>
        <taxon>Bifidobacteriales</taxon>
        <taxon>Bifidobacteriaceae</taxon>
        <taxon>Bifidobacterium</taxon>
    </lineage>
</organism>
<evidence type="ECO:0000255" key="1">
    <source>
        <dbReference type="HAMAP-Rule" id="MF_00340"/>
    </source>
</evidence>
<evidence type="ECO:0000305" key="2"/>
<sequence length="64" mass="6929">MALPKYKTSRANTHSRRANWKATAAATVNCPNCGAPALPHMACPSCGNYRGRTYRSAIQPAHTK</sequence>
<accession>B3DTL7</accession>
<dbReference type="EMBL" id="CP000605">
    <property type="protein sequence ID" value="ACD98486.1"/>
    <property type="molecule type" value="Genomic_DNA"/>
</dbReference>
<dbReference type="RefSeq" id="WP_007051413.1">
    <property type="nucleotide sequence ID" value="NZ_AABM02000007.1"/>
</dbReference>
<dbReference type="SMR" id="B3DTL7"/>
<dbReference type="GeneID" id="69577563"/>
<dbReference type="KEGG" id="blj:BLD_1040"/>
<dbReference type="HOGENOM" id="CLU_129084_1_1_11"/>
<dbReference type="Proteomes" id="UP000002419">
    <property type="component" value="Chromosome"/>
</dbReference>
<dbReference type="GO" id="GO:0015934">
    <property type="term" value="C:large ribosomal subunit"/>
    <property type="evidence" value="ECO:0007669"/>
    <property type="project" value="InterPro"/>
</dbReference>
<dbReference type="GO" id="GO:0003735">
    <property type="term" value="F:structural constituent of ribosome"/>
    <property type="evidence" value="ECO:0007669"/>
    <property type="project" value="InterPro"/>
</dbReference>
<dbReference type="GO" id="GO:0006412">
    <property type="term" value="P:translation"/>
    <property type="evidence" value="ECO:0007669"/>
    <property type="project" value="UniProtKB-UniRule"/>
</dbReference>
<dbReference type="HAMAP" id="MF_00340">
    <property type="entry name" value="Ribosomal_bL32"/>
    <property type="match status" value="1"/>
</dbReference>
<dbReference type="InterPro" id="IPR002677">
    <property type="entry name" value="Ribosomal_bL32"/>
</dbReference>
<dbReference type="InterPro" id="IPR044957">
    <property type="entry name" value="Ribosomal_bL32_bact"/>
</dbReference>
<dbReference type="InterPro" id="IPR011332">
    <property type="entry name" value="Ribosomal_zn-bd"/>
</dbReference>
<dbReference type="NCBIfam" id="TIGR01031">
    <property type="entry name" value="rpmF_bact"/>
    <property type="match status" value="1"/>
</dbReference>
<dbReference type="PANTHER" id="PTHR35534">
    <property type="entry name" value="50S RIBOSOMAL PROTEIN L32"/>
    <property type="match status" value="1"/>
</dbReference>
<dbReference type="PANTHER" id="PTHR35534:SF1">
    <property type="entry name" value="LARGE RIBOSOMAL SUBUNIT PROTEIN BL32"/>
    <property type="match status" value="1"/>
</dbReference>
<dbReference type="Pfam" id="PF01783">
    <property type="entry name" value="Ribosomal_L32p"/>
    <property type="match status" value="1"/>
</dbReference>
<dbReference type="SUPFAM" id="SSF57829">
    <property type="entry name" value="Zn-binding ribosomal proteins"/>
    <property type="match status" value="1"/>
</dbReference>
<reference key="1">
    <citation type="journal article" date="2008" name="BMC Genomics">
        <title>Comparative genomic analysis of the gut bacterium Bifidobacterium longum reveals loci susceptible to deletion during pure culture growth.</title>
        <authorList>
            <person name="Lee J.H."/>
            <person name="Karamychev V.N."/>
            <person name="Kozyavkin S.A."/>
            <person name="Mills D."/>
            <person name="Pavlov A.R."/>
            <person name="Pavlova N.V."/>
            <person name="Polouchine N.N."/>
            <person name="Richardson P.M."/>
            <person name="Shakhova V.V."/>
            <person name="Slesarev A.I."/>
            <person name="Weimer B."/>
            <person name="O'Sullivan D.J."/>
        </authorList>
    </citation>
    <scope>NUCLEOTIDE SEQUENCE [LARGE SCALE GENOMIC DNA]</scope>
    <source>
        <strain>DJO10A</strain>
    </source>
</reference>